<organism>
    <name type="scientific">Escherichia coli (strain K12 / MC4100 / BW2952)</name>
    <dbReference type="NCBI Taxonomy" id="595496"/>
    <lineage>
        <taxon>Bacteria</taxon>
        <taxon>Pseudomonadati</taxon>
        <taxon>Pseudomonadota</taxon>
        <taxon>Gammaproteobacteria</taxon>
        <taxon>Enterobacterales</taxon>
        <taxon>Enterobacteriaceae</taxon>
        <taxon>Escherichia</taxon>
    </lineage>
</organism>
<reference key="1">
    <citation type="journal article" date="2009" name="J. Bacteriol.">
        <title>Genomic sequencing reveals regulatory mutations and recombinational events in the widely used MC4100 lineage of Escherichia coli K-12.</title>
        <authorList>
            <person name="Ferenci T."/>
            <person name="Zhou Z."/>
            <person name="Betteridge T."/>
            <person name="Ren Y."/>
            <person name="Liu Y."/>
            <person name="Feng L."/>
            <person name="Reeves P.R."/>
            <person name="Wang L."/>
        </authorList>
    </citation>
    <scope>NUCLEOTIDE SEQUENCE [LARGE SCALE GENOMIC DNA]</scope>
    <source>
        <strain>K12 / MC4100 / BW2952</strain>
    </source>
</reference>
<sequence>MRSKYIVIEGLEGAGKTTARNVVVETLEQLGIRDMVFTREPGGTQLAEKLRSLVLDIKSVGDEVITDKAEVLMFYAARVQLVETVIKPALANGTWVIGDRHDLSTQAYQGGGRGIDQHMLATLRDAVLGDFRPDLTLYLDVTPEVGLKRARARGELDRIEQESFDFFNRTRARYLELAAQDKSIHTIDATQPLEAVMDAIRTTVTHWVKELDA</sequence>
<evidence type="ECO:0000255" key="1">
    <source>
        <dbReference type="HAMAP-Rule" id="MF_00165"/>
    </source>
</evidence>
<keyword id="KW-0067">ATP-binding</keyword>
<keyword id="KW-0418">Kinase</keyword>
<keyword id="KW-0545">Nucleotide biosynthesis</keyword>
<keyword id="KW-0547">Nucleotide-binding</keyword>
<keyword id="KW-0808">Transferase</keyword>
<accession>C4ZS38</accession>
<comment type="function">
    <text evidence="1">Phosphorylation of dTMP to form dTDP in both de novo and salvage pathways of dTTP synthesis.</text>
</comment>
<comment type="catalytic activity">
    <reaction evidence="1">
        <text>dTMP + ATP = dTDP + ADP</text>
        <dbReference type="Rhea" id="RHEA:13517"/>
        <dbReference type="ChEBI" id="CHEBI:30616"/>
        <dbReference type="ChEBI" id="CHEBI:58369"/>
        <dbReference type="ChEBI" id="CHEBI:63528"/>
        <dbReference type="ChEBI" id="CHEBI:456216"/>
        <dbReference type="EC" id="2.7.4.9"/>
    </reaction>
</comment>
<comment type="similarity">
    <text evidence="1">Belongs to the thymidylate kinase family.</text>
</comment>
<gene>
    <name evidence="1" type="primary">tmk</name>
    <name type="ordered locus">BWG_0946</name>
</gene>
<dbReference type="EC" id="2.7.4.9" evidence="1"/>
<dbReference type="EMBL" id="CP001396">
    <property type="protein sequence ID" value="ACR65658.1"/>
    <property type="molecule type" value="Genomic_DNA"/>
</dbReference>
<dbReference type="RefSeq" id="WP_001257000.1">
    <property type="nucleotide sequence ID" value="NC_012759.1"/>
</dbReference>
<dbReference type="SMR" id="C4ZS38"/>
<dbReference type="GeneID" id="93776310"/>
<dbReference type="KEGG" id="ebw:BWG_0946"/>
<dbReference type="HOGENOM" id="CLU_049131_0_1_6"/>
<dbReference type="GO" id="GO:0005829">
    <property type="term" value="C:cytosol"/>
    <property type="evidence" value="ECO:0007669"/>
    <property type="project" value="TreeGrafter"/>
</dbReference>
<dbReference type="GO" id="GO:0005524">
    <property type="term" value="F:ATP binding"/>
    <property type="evidence" value="ECO:0007669"/>
    <property type="project" value="UniProtKB-UniRule"/>
</dbReference>
<dbReference type="GO" id="GO:0004798">
    <property type="term" value="F:dTMP kinase activity"/>
    <property type="evidence" value="ECO:0007669"/>
    <property type="project" value="UniProtKB-UniRule"/>
</dbReference>
<dbReference type="GO" id="GO:0006233">
    <property type="term" value="P:dTDP biosynthetic process"/>
    <property type="evidence" value="ECO:0007669"/>
    <property type="project" value="InterPro"/>
</dbReference>
<dbReference type="GO" id="GO:0006235">
    <property type="term" value="P:dTTP biosynthetic process"/>
    <property type="evidence" value="ECO:0007669"/>
    <property type="project" value="UniProtKB-UniRule"/>
</dbReference>
<dbReference type="GO" id="GO:0006227">
    <property type="term" value="P:dUDP biosynthetic process"/>
    <property type="evidence" value="ECO:0007669"/>
    <property type="project" value="TreeGrafter"/>
</dbReference>
<dbReference type="CDD" id="cd01672">
    <property type="entry name" value="TMPK"/>
    <property type="match status" value="1"/>
</dbReference>
<dbReference type="FunFam" id="3.40.50.300:FF:000321">
    <property type="entry name" value="Thymidylate kinase"/>
    <property type="match status" value="1"/>
</dbReference>
<dbReference type="Gene3D" id="3.40.50.300">
    <property type="entry name" value="P-loop containing nucleotide triphosphate hydrolases"/>
    <property type="match status" value="1"/>
</dbReference>
<dbReference type="HAMAP" id="MF_00165">
    <property type="entry name" value="Thymidylate_kinase"/>
    <property type="match status" value="1"/>
</dbReference>
<dbReference type="InterPro" id="IPR027417">
    <property type="entry name" value="P-loop_NTPase"/>
</dbReference>
<dbReference type="InterPro" id="IPR039430">
    <property type="entry name" value="Thymidylate_kin-like_dom"/>
</dbReference>
<dbReference type="InterPro" id="IPR018095">
    <property type="entry name" value="Thymidylate_kin_CS"/>
</dbReference>
<dbReference type="InterPro" id="IPR018094">
    <property type="entry name" value="Thymidylate_kinase"/>
</dbReference>
<dbReference type="NCBIfam" id="TIGR00041">
    <property type="entry name" value="DTMP_kinase"/>
    <property type="match status" value="1"/>
</dbReference>
<dbReference type="PANTHER" id="PTHR10344">
    <property type="entry name" value="THYMIDYLATE KINASE"/>
    <property type="match status" value="1"/>
</dbReference>
<dbReference type="PANTHER" id="PTHR10344:SF4">
    <property type="entry name" value="UMP-CMP KINASE 2, MITOCHONDRIAL"/>
    <property type="match status" value="1"/>
</dbReference>
<dbReference type="Pfam" id="PF02223">
    <property type="entry name" value="Thymidylate_kin"/>
    <property type="match status" value="1"/>
</dbReference>
<dbReference type="SUPFAM" id="SSF52540">
    <property type="entry name" value="P-loop containing nucleoside triphosphate hydrolases"/>
    <property type="match status" value="1"/>
</dbReference>
<dbReference type="PROSITE" id="PS01331">
    <property type="entry name" value="THYMIDYLATE_KINASE"/>
    <property type="match status" value="1"/>
</dbReference>
<feature type="chain" id="PRO_1000203614" description="Thymidylate kinase">
    <location>
        <begin position="1"/>
        <end position="213"/>
    </location>
</feature>
<feature type="binding site" evidence="1">
    <location>
        <begin position="10"/>
        <end position="17"/>
    </location>
    <ligand>
        <name>ATP</name>
        <dbReference type="ChEBI" id="CHEBI:30616"/>
    </ligand>
</feature>
<protein>
    <recommendedName>
        <fullName evidence="1">Thymidylate kinase</fullName>
        <ecNumber evidence="1">2.7.4.9</ecNumber>
    </recommendedName>
    <alternativeName>
        <fullName evidence="1">dTMP kinase</fullName>
    </alternativeName>
</protein>
<name>KTHY_ECOBW</name>
<proteinExistence type="inferred from homology"/>